<comment type="function">
    <text evidence="1">Peptide chain release factor 1 directs the termination of translation in response to the peptide chain termination codons UAG and UAA.</text>
</comment>
<comment type="subcellular location">
    <subcellularLocation>
        <location evidence="1">Cytoplasm</location>
    </subcellularLocation>
</comment>
<comment type="PTM">
    <text evidence="1">Methylated by PrmC. Methylation increases the termination efficiency of RF1.</text>
</comment>
<comment type="similarity">
    <text evidence="1">Belongs to the prokaryotic/mitochondrial release factor family.</text>
</comment>
<keyword id="KW-0963">Cytoplasm</keyword>
<keyword id="KW-0488">Methylation</keyword>
<keyword id="KW-0648">Protein biosynthesis</keyword>
<feature type="chain" id="PRO_1000057616" description="Peptide chain release factor 1">
    <location>
        <begin position="1"/>
        <end position="360"/>
    </location>
</feature>
<feature type="region of interest" description="Disordered" evidence="2">
    <location>
        <begin position="284"/>
        <end position="313"/>
    </location>
</feature>
<feature type="modified residue" description="N5-methylglutamine" evidence="1">
    <location>
        <position position="235"/>
    </location>
</feature>
<name>RF1_ECOHS</name>
<gene>
    <name evidence="1" type="primary">prfA</name>
    <name type="ordered locus">EcHS_A1316</name>
</gene>
<proteinExistence type="inferred from homology"/>
<protein>
    <recommendedName>
        <fullName evidence="1">Peptide chain release factor 1</fullName>
        <shortName evidence="1">RF-1</shortName>
    </recommendedName>
</protein>
<dbReference type="EMBL" id="CP000802">
    <property type="protein sequence ID" value="ABV05651.1"/>
    <property type="molecule type" value="Genomic_DNA"/>
</dbReference>
<dbReference type="RefSeq" id="WP_000804726.1">
    <property type="nucleotide sequence ID" value="NC_009800.1"/>
</dbReference>
<dbReference type="SMR" id="A7ZZE7"/>
<dbReference type="GeneID" id="93775276"/>
<dbReference type="KEGG" id="ecx:EcHS_A1316"/>
<dbReference type="HOGENOM" id="CLU_036856_0_1_6"/>
<dbReference type="GO" id="GO:0005737">
    <property type="term" value="C:cytoplasm"/>
    <property type="evidence" value="ECO:0007669"/>
    <property type="project" value="UniProtKB-SubCell"/>
</dbReference>
<dbReference type="GO" id="GO:0016149">
    <property type="term" value="F:translation release factor activity, codon specific"/>
    <property type="evidence" value="ECO:0007669"/>
    <property type="project" value="UniProtKB-UniRule"/>
</dbReference>
<dbReference type="FunFam" id="3.30.160.20:FF:000004">
    <property type="entry name" value="Peptide chain release factor 1"/>
    <property type="match status" value="1"/>
</dbReference>
<dbReference type="FunFam" id="3.30.70.1660:FF:000002">
    <property type="entry name" value="Peptide chain release factor 1"/>
    <property type="match status" value="1"/>
</dbReference>
<dbReference type="FunFam" id="3.30.70.1660:FF:000004">
    <property type="entry name" value="Peptide chain release factor 1"/>
    <property type="match status" value="1"/>
</dbReference>
<dbReference type="Gene3D" id="3.30.160.20">
    <property type="match status" value="1"/>
</dbReference>
<dbReference type="Gene3D" id="3.30.70.1660">
    <property type="match status" value="1"/>
</dbReference>
<dbReference type="Gene3D" id="6.10.140.1950">
    <property type="match status" value="1"/>
</dbReference>
<dbReference type="HAMAP" id="MF_00093">
    <property type="entry name" value="Rel_fac_1"/>
    <property type="match status" value="1"/>
</dbReference>
<dbReference type="InterPro" id="IPR005139">
    <property type="entry name" value="PCRF"/>
</dbReference>
<dbReference type="InterPro" id="IPR000352">
    <property type="entry name" value="Pep_chain_release_fac_I"/>
</dbReference>
<dbReference type="InterPro" id="IPR045853">
    <property type="entry name" value="Pep_chain_release_fac_I_sf"/>
</dbReference>
<dbReference type="InterPro" id="IPR050057">
    <property type="entry name" value="Prokaryotic/Mito_RF"/>
</dbReference>
<dbReference type="InterPro" id="IPR004373">
    <property type="entry name" value="RF-1"/>
</dbReference>
<dbReference type="NCBIfam" id="TIGR00019">
    <property type="entry name" value="prfA"/>
    <property type="match status" value="1"/>
</dbReference>
<dbReference type="NCBIfam" id="NF001859">
    <property type="entry name" value="PRK00591.1"/>
    <property type="match status" value="1"/>
</dbReference>
<dbReference type="PANTHER" id="PTHR43804">
    <property type="entry name" value="LD18447P"/>
    <property type="match status" value="1"/>
</dbReference>
<dbReference type="PANTHER" id="PTHR43804:SF7">
    <property type="entry name" value="LD18447P"/>
    <property type="match status" value="1"/>
</dbReference>
<dbReference type="Pfam" id="PF03462">
    <property type="entry name" value="PCRF"/>
    <property type="match status" value="1"/>
</dbReference>
<dbReference type="Pfam" id="PF00472">
    <property type="entry name" value="RF-1"/>
    <property type="match status" value="1"/>
</dbReference>
<dbReference type="SMART" id="SM00937">
    <property type="entry name" value="PCRF"/>
    <property type="match status" value="1"/>
</dbReference>
<dbReference type="SUPFAM" id="SSF75620">
    <property type="entry name" value="Release factor"/>
    <property type="match status" value="1"/>
</dbReference>
<dbReference type="PROSITE" id="PS00745">
    <property type="entry name" value="RF_PROK_I"/>
    <property type="match status" value="1"/>
</dbReference>
<accession>A7ZZE7</accession>
<reference key="1">
    <citation type="journal article" date="2008" name="J. Bacteriol.">
        <title>The pangenome structure of Escherichia coli: comparative genomic analysis of E. coli commensal and pathogenic isolates.</title>
        <authorList>
            <person name="Rasko D.A."/>
            <person name="Rosovitz M.J."/>
            <person name="Myers G.S.A."/>
            <person name="Mongodin E.F."/>
            <person name="Fricke W.F."/>
            <person name="Gajer P."/>
            <person name="Crabtree J."/>
            <person name="Sebaihia M."/>
            <person name="Thomson N.R."/>
            <person name="Chaudhuri R."/>
            <person name="Henderson I.R."/>
            <person name="Sperandio V."/>
            <person name="Ravel J."/>
        </authorList>
    </citation>
    <scope>NUCLEOTIDE SEQUENCE [LARGE SCALE GENOMIC DNA]</scope>
    <source>
        <strain>HS</strain>
    </source>
</reference>
<sequence length="360" mass="40517">MKPSIVAKLEALHERHEEVQALLGDAQTIADQERFRALSREYAQLSDVSRCFTDWQQVQEDIETAQMMLDDPEMREMAQDELREAKEKSEQLEQQLQVLLLPKDPDDERNAFLEVRAGTGGDEAALFAGDLFRMYSRYAEARRWRVEIMSASEGEHGGYKEIIAKISGDGVYGRLKFESGGHRVQRVPATESQGRIHTSACTVAVMPELPDAELPDINPADLRIDTFRSSGAGGQHVNTTDSAIRITHLPTGIVVECQDERSQHKNKAKALSVLGARIHAAEMAKRQQAEASTRRNLLGSGDRSDRNRTYNFPQGRVTDHRINLTLYRLDEVMEGKLDMLIEPIIQEHQADQLAALSEQE</sequence>
<organism>
    <name type="scientific">Escherichia coli O9:H4 (strain HS)</name>
    <dbReference type="NCBI Taxonomy" id="331112"/>
    <lineage>
        <taxon>Bacteria</taxon>
        <taxon>Pseudomonadati</taxon>
        <taxon>Pseudomonadota</taxon>
        <taxon>Gammaproteobacteria</taxon>
        <taxon>Enterobacterales</taxon>
        <taxon>Enterobacteriaceae</taxon>
        <taxon>Escherichia</taxon>
    </lineage>
</organism>
<evidence type="ECO:0000255" key="1">
    <source>
        <dbReference type="HAMAP-Rule" id="MF_00093"/>
    </source>
</evidence>
<evidence type="ECO:0000256" key="2">
    <source>
        <dbReference type="SAM" id="MobiDB-lite"/>
    </source>
</evidence>